<reference key="1">
    <citation type="journal article" date="2005" name="Genome Biol.">
        <title>Full-length cDNAs from chicken bursal lymphocytes to facilitate gene function analysis.</title>
        <authorList>
            <person name="Caldwell R.B."/>
            <person name="Kierzek A.M."/>
            <person name="Arakawa H."/>
            <person name="Bezzubov Y."/>
            <person name="Zaim J."/>
            <person name="Fiedler P."/>
            <person name="Kutter S."/>
            <person name="Blagodatski A."/>
            <person name="Kostovska D."/>
            <person name="Koter M."/>
            <person name="Plachy J."/>
            <person name="Carninci P."/>
            <person name="Hayashizaki Y."/>
            <person name="Buerstedde J.-M."/>
        </authorList>
    </citation>
    <scope>NUCLEOTIDE SEQUENCE [LARGE SCALE MRNA]</scope>
    <source>
        <strain>CB</strain>
        <tissue>Bursa of Fabricius</tissue>
    </source>
</reference>
<name>SPN1_CHICK</name>
<protein>
    <recommendedName>
        <fullName>Snurportin-1</fullName>
    </recommendedName>
    <alternativeName>
        <fullName>RNA U transporter 1</fullName>
    </alternativeName>
</protein>
<evidence type="ECO:0000250" key="1">
    <source>
        <dbReference type="UniProtKB" id="O95149"/>
    </source>
</evidence>
<evidence type="ECO:0000255" key="2">
    <source>
        <dbReference type="PROSITE-ProRule" id="PRU00561"/>
    </source>
</evidence>
<evidence type="ECO:0000256" key="3">
    <source>
        <dbReference type="SAM" id="MobiDB-lite"/>
    </source>
</evidence>
<evidence type="ECO:0000305" key="4"/>
<proteinExistence type="evidence at transcript level"/>
<sequence length="365" mass="40742">MEELCAALAGGVALAAPNSPAAPHPRLSAYKGRGDRLGQAERRRRLLCLQRERRLDYVNHARRLAEGDWAGVESDEDGGEDGDGEEEMEVDAGRRLPKRYANQLMLSEWLVDVPVDLEQEWIVVVCPVGKRALVVASRGSTAAYTKSGFCVNRFPSLLPGGNRHNTMNEKVYCILDCIYNEAEQTYYILDVMCWRGHPVYDCQTDFRFFWLSSKIQEEEGLGEKSRINPYKFVGLQNFPCTSESLCEVLTTNFPFEVDGLLFYHKQTHYTPGSTPLVGWLRPYMVPDILGLTVPATPLTAKPDYAGRQLQQIIESKRSKKLAAGKAQPSAEAAARNGHYELEHLSTPQPANSAQGQEEAGSQMEN</sequence>
<feature type="chain" id="PRO_0000191074" description="Snurportin-1">
    <location>
        <begin position="1"/>
        <end position="365"/>
    </location>
</feature>
<feature type="domain" description="IBB" evidence="2">
    <location>
        <begin position="10"/>
        <end position="72"/>
    </location>
</feature>
<feature type="region of interest" description="Disordered" evidence="3">
    <location>
        <begin position="15"/>
        <end position="34"/>
    </location>
</feature>
<feature type="region of interest" description="Disordered" evidence="3">
    <location>
        <begin position="69"/>
        <end position="90"/>
    </location>
</feature>
<feature type="region of interest" description="Interaction with m3G-cap structure" evidence="1">
    <location>
        <begin position="129"/>
        <end position="131"/>
    </location>
</feature>
<feature type="region of interest" description="Necessary for binding to the m3G-cap structure" evidence="1">
    <location>
        <begin position="211"/>
        <end position="333"/>
    </location>
</feature>
<feature type="region of interest" description="Disordered" evidence="3">
    <location>
        <begin position="317"/>
        <end position="365"/>
    </location>
</feature>
<feature type="compositionally biased region" description="Acidic residues" evidence="3">
    <location>
        <begin position="73"/>
        <end position="90"/>
    </location>
</feature>
<feature type="compositionally biased region" description="Polar residues" evidence="3">
    <location>
        <begin position="345"/>
        <end position="355"/>
    </location>
</feature>
<feature type="site" description="Interaction with m3G-cap structure" evidence="1">
    <location>
        <position position="107"/>
    </location>
</feature>
<feature type="site" description="Interaction with m3G-cap structure" evidence="1">
    <location>
        <position position="146"/>
    </location>
</feature>
<feature type="site" description="Interaction with m3G-cap structure" evidence="1">
    <location>
        <position position="279"/>
    </location>
</feature>
<gene>
    <name type="primary">SNUPN</name>
    <name type="synonym">RNUT1</name>
    <name type="ORF">RCJMB04_30h8</name>
</gene>
<dbReference type="EMBL" id="AJ720941">
    <property type="protein sequence ID" value="CAG32600.1"/>
    <property type="molecule type" value="mRNA"/>
</dbReference>
<dbReference type="RefSeq" id="NP_001074347.1">
    <property type="nucleotide sequence ID" value="NM_001080878.2"/>
</dbReference>
<dbReference type="SMR" id="Q5ZI43"/>
<dbReference type="FunCoup" id="Q5ZI43">
    <property type="interactions" value="1643"/>
</dbReference>
<dbReference type="STRING" id="9031.ENSGALP00000045635"/>
<dbReference type="PaxDb" id="9031-ENSGALP00000041377"/>
<dbReference type="Ensembl" id="ENSGALT00010052003.1">
    <property type="protein sequence ID" value="ENSGALP00010031041.1"/>
    <property type="gene ID" value="ENSGALG00010021443.1"/>
</dbReference>
<dbReference type="GeneID" id="770225"/>
<dbReference type="KEGG" id="gga:770225"/>
<dbReference type="CTD" id="10073"/>
<dbReference type="VEuPathDB" id="HostDB:geneid_770225"/>
<dbReference type="eggNOG" id="KOG3132">
    <property type="taxonomic scope" value="Eukaryota"/>
</dbReference>
<dbReference type="GeneTree" id="ENSGT00510000047494"/>
<dbReference type="InParanoid" id="Q5ZI43"/>
<dbReference type="OMA" id="ENWIMVP"/>
<dbReference type="OrthoDB" id="10003593at2759"/>
<dbReference type="PhylomeDB" id="Q5ZI43"/>
<dbReference type="PRO" id="PR:Q5ZI43"/>
<dbReference type="Proteomes" id="UP000000539">
    <property type="component" value="Chromosome 10"/>
</dbReference>
<dbReference type="GO" id="GO:0005829">
    <property type="term" value="C:cytosol"/>
    <property type="evidence" value="ECO:0007669"/>
    <property type="project" value="Ensembl"/>
</dbReference>
<dbReference type="GO" id="GO:0042564">
    <property type="term" value="C:NLS-dependent protein nuclear import complex"/>
    <property type="evidence" value="ECO:0007669"/>
    <property type="project" value="Ensembl"/>
</dbReference>
<dbReference type="GO" id="GO:0005654">
    <property type="term" value="C:nucleoplasm"/>
    <property type="evidence" value="ECO:0007669"/>
    <property type="project" value="Ensembl"/>
</dbReference>
<dbReference type="GO" id="GO:0005634">
    <property type="term" value="C:nucleus"/>
    <property type="evidence" value="ECO:0000250"/>
    <property type="project" value="UniProtKB"/>
</dbReference>
<dbReference type="GO" id="GO:0005886">
    <property type="term" value="C:plasma membrane"/>
    <property type="evidence" value="ECO:0007669"/>
    <property type="project" value="Ensembl"/>
</dbReference>
<dbReference type="GO" id="GO:0061608">
    <property type="term" value="F:nuclear import signal receptor activity"/>
    <property type="evidence" value="ECO:0007669"/>
    <property type="project" value="InterPro"/>
</dbReference>
<dbReference type="GO" id="GO:0003723">
    <property type="term" value="F:RNA binding"/>
    <property type="evidence" value="ECO:0007669"/>
    <property type="project" value="UniProtKB-KW"/>
</dbReference>
<dbReference type="GO" id="GO:0007010">
    <property type="term" value="P:cytoskeleton organization"/>
    <property type="evidence" value="ECO:0000250"/>
    <property type="project" value="UniProtKB"/>
</dbReference>
<dbReference type="GO" id="GO:0006606">
    <property type="term" value="P:protein import into nucleus"/>
    <property type="evidence" value="ECO:0007669"/>
    <property type="project" value="InterPro"/>
</dbReference>
<dbReference type="GO" id="GO:0051262">
    <property type="term" value="P:protein tetramerization"/>
    <property type="evidence" value="ECO:0007669"/>
    <property type="project" value="Ensembl"/>
</dbReference>
<dbReference type="GO" id="GO:0006404">
    <property type="term" value="P:RNA import into nucleus"/>
    <property type="evidence" value="ECO:0000250"/>
    <property type="project" value="UniProtKB"/>
</dbReference>
<dbReference type="GO" id="GO:0061015">
    <property type="term" value="P:snRNA import into nucleus"/>
    <property type="evidence" value="ECO:0007669"/>
    <property type="project" value="InterPro"/>
</dbReference>
<dbReference type="CDD" id="cd09232">
    <property type="entry name" value="Snurportin-1_C"/>
    <property type="match status" value="1"/>
</dbReference>
<dbReference type="Gene3D" id="3.30.470.30">
    <property type="entry name" value="DNA ligase/mRNA capping enzyme"/>
    <property type="match status" value="1"/>
</dbReference>
<dbReference type="InterPro" id="IPR002652">
    <property type="entry name" value="Importin-a_IBB"/>
</dbReference>
<dbReference type="InterPro" id="IPR017336">
    <property type="entry name" value="Snurportin-1"/>
</dbReference>
<dbReference type="InterPro" id="IPR024721">
    <property type="entry name" value="Snurportin-1_N"/>
</dbReference>
<dbReference type="InterPro" id="IPR047857">
    <property type="entry name" value="Snurportin1_C"/>
</dbReference>
<dbReference type="PANTHER" id="PTHR13403:SF6">
    <property type="entry name" value="SNURPORTIN-1"/>
    <property type="match status" value="1"/>
</dbReference>
<dbReference type="PANTHER" id="PTHR13403">
    <property type="entry name" value="SNURPORTIN1 RNUT1 PROTEIN RNA, U TRANSPORTER 1"/>
    <property type="match status" value="1"/>
</dbReference>
<dbReference type="Pfam" id="PF11538">
    <property type="entry name" value="Snurportin1"/>
    <property type="match status" value="1"/>
</dbReference>
<dbReference type="Pfam" id="PF21974">
    <property type="entry name" value="SPN1_m3Gcap_bd"/>
    <property type="match status" value="1"/>
</dbReference>
<dbReference type="PIRSF" id="PIRSF037955">
    <property type="entry name" value="Snurportin-1"/>
    <property type="match status" value="1"/>
</dbReference>
<dbReference type="SUPFAM" id="SSF56091">
    <property type="entry name" value="DNA ligase/mRNA capping enzyme, catalytic domain"/>
    <property type="match status" value="1"/>
</dbReference>
<dbReference type="PROSITE" id="PS51214">
    <property type="entry name" value="IBB"/>
    <property type="match status" value="1"/>
</dbReference>
<accession>Q5ZI43</accession>
<comment type="function">
    <text evidence="1">Functions as an U snRNP-specific nuclear import adapter. Involved in the trimethylguanosine (m3G)-cap-dependent nuclear import of U snRNPs. Binds specifically to the terminal m3G-cap U snRNAs.</text>
</comment>
<comment type="subcellular location">
    <subcellularLocation>
        <location evidence="1">Nucleus</location>
    </subcellularLocation>
    <subcellularLocation>
        <location evidence="1">Cytoplasm</location>
    </subcellularLocation>
    <text evidence="1">Nucleoplasmic shuttling protein.</text>
</comment>
<comment type="similarity">
    <text evidence="4">Belongs to the snurportin family.</text>
</comment>
<keyword id="KW-0963">Cytoplasm</keyword>
<keyword id="KW-0539">Nucleus</keyword>
<keyword id="KW-1185">Reference proteome</keyword>
<keyword id="KW-0694">RNA-binding</keyword>
<keyword id="KW-0813">Transport</keyword>
<organism>
    <name type="scientific">Gallus gallus</name>
    <name type="common">Chicken</name>
    <dbReference type="NCBI Taxonomy" id="9031"/>
    <lineage>
        <taxon>Eukaryota</taxon>
        <taxon>Metazoa</taxon>
        <taxon>Chordata</taxon>
        <taxon>Craniata</taxon>
        <taxon>Vertebrata</taxon>
        <taxon>Euteleostomi</taxon>
        <taxon>Archelosauria</taxon>
        <taxon>Archosauria</taxon>
        <taxon>Dinosauria</taxon>
        <taxon>Saurischia</taxon>
        <taxon>Theropoda</taxon>
        <taxon>Coelurosauria</taxon>
        <taxon>Aves</taxon>
        <taxon>Neognathae</taxon>
        <taxon>Galloanserae</taxon>
        <taxon>Galliformes</taxon>
        <taxon>Phasianidae</taxon>
        <taxon>Phasianinae</taxon>
        <taxon>Gallus</taxon>
    </lineage>
</organism>